<reference key="1">
    <citation type="journal article" date="1987" name="Biochemistry">
        <title>Ovomucoid third domains from 100 avian species: isolation, sequences, and hypervariability of enzyme-inhibitor contact residues.</title>
        <authorList>
            <person name="Laskowski M. Jr."/>
            <person name="Kato I."/>
            <person name="Ardelt W."/>
            <person name="Cook J."/>
            <person name="Denton A."/>
            <person name="Empie M.W."/>
            <person name="Kohr W.J."/>
            <person name="Park S.J."/>
            <person name="Parks K."/>
            <person name="Schatzley B.L."/>
            <person name="Schoenberger O.L."/>
            <person name="Tashiro M."/>
            <person name="Vichot G."/>
            <person name="Whatley H.E."/>
            <person name="Wieczorek A."/>
            <person name="Wieczorek M."/>
        </authorList>
    </citation>
    <scope>PROTEIN SEQUENCE</scope>
</reference>
<name>IOVO_PELCO</name>
<protein>
    <recommendedName>
        <fullName>Ovomucoid</fullName>
    </recommendedName>
</protein>
<accession>P05595</accession>
<keyword id="KW-0903">Direct protein sequencing</keyword>
<keyword id="KW-1015">Disulfide bond</keyword>
<keyword id="KW-0325">Glycoprotein</keyword>
<keyword id="KW-0646">Protease inhibitor</keyword>
<keyword id="KW-0677">Repeat</keyword>
<keyword id="KW-0964">Secreted</keyword>
<keyword id="KW-0722">Serine protease inhibitor</keyword>
<dbReference type="PIR" id="G31438">
    <property type="entry name" value="G31438"/>
</dbReference>
<dbReference type="SMR" id="P05595"/>
<dbReference type="iPTMnet" id="P05595"/>
<dbReference type="GO" id="GO:0005576">
    <property type="term" value="C:extracellular region"/>
    <property type="evidence" value="ECO:0007669"/>
    <property type="project" value="UniProtKB-SubCell"/>
</dbReference>
<dbReference type="GO" id="GO:0004867">
    <property type="term" value="F:serine-type endopeptidase inhibitor activity"/>
    <property type="evidence" value="ECO:0007669"/>
    <property type="project" value="UniProtKB-KW"/>
</dbReference>
<dbReference type="CDD" id="cd00104">
    <property type="entry name" value="KAZAL_FS"/>
    <property type="match status" value="1"/>
</dbReference>
<dbReference type="FunFam" id="3.30.60.30:FF:000037">
    <property type="entry name" value="Ovomucoid"/>
    <property type="match status" value="1"/>
</dbReference>
<dbReference type="Gene3D" id="3.30.60.30">
    <property type="match status" value="1"/>
</dbReference>
<dbReference type="InterPro" id="IPR051597">
    <property type="entry name" value="Bifunctional_prot_inhibitor"/>
</dbReference>
<dbReference type="InterPro" id="IPR002350">
    <property type="entry name" value="Kazal_dom"/>
</dbReference>
<dbReference type="InterPro" id="IPR036058">
    <property type="entry name" value="Kazal_dom_sf"/>
</dbReference>
<dbReference type="InterPro" id="IPR001239">
    <property type="entry name" value="Prot_inh_Kazal-m"/>
</dbReference>
<dbReference type="PANTHER" id="PTHR47729:SF1">
    <property type="entry name" value="OVOMUCOID-LIKE-RELATED"/>
    <property type="match status" value="1"/>
</dbReference>
<dbReference type="PANTHER" id="PTHR47729">
    <property type="entry name" value="SERINE PEPTIDASE INHIBITOR, KAZAL TYPE 2, TANDEM DUPLICATE 1-RELATED"/>
    <property type="match status" value="1"/>
</dbReference>
<dbReference type="Pfam" id="PF00050">
    <property type="entry name" value="Kazal_1"/>
    <property type="match status" value="1"/>
</dbReference>
<dbReference type="PRINTS" id="PR00290">
    <property type="entry name" value="KAZALINHBTR"/>
</dbReference>
<dbReference type="SMART" id="SM00280">
    <property type="entry name" value="KAZAL"/>
    <property type="match status" value="1"/>
</dbReference>
<dbReference type="SUPFAM" id="SSF100895">
    <property type="entry name" value="Kazal-type serine protease inhibitors"/>
    <property type="match status" value="1"/>
</dbReference>
<dbReference type="PROSITE" id="PS00282">
    <property type="entry name" value="KAZAL_1"/>
    <property type="match status" value="1"/>
</dbReference>
<dbReference type="PROSITE" id="PS51465">
    <property type="entry name" value="KAZAL_2"/>
    <property type="match status" value="1"/>
</dbReference>
<sequence length="53" mass="5740">VSVDCSEYPKPGCTMEYRPVCGSDNITYGNKCNFCNAVVKSNGTLTLSHFGKC</sequence>
<feature type="chain" id="PRO_0000073109" description="Ovomucoid">
    <location>
        <begin position="1" status="less than"/>
        <end position="53" status="greater than"/>
    </location>
</feature>
<feature type="domain" description="Kazal-like" evidence="1">
    <location>
        <begin position="3"/>
        <end position="53"/>
    </location>
</feature>
<feature type="site" description="Reactive bond 3">
    <location>
        <begin position="15"/>
        <end position="16"/>
    </location>
</feature>
<feature type="glycosylation site" description="N-linked (GlcNAc...) asparagine" evidence="2">
    <location>
        <position position="42"/>
    </location>
</feature>
<feature type="disulfide bond">
    <location>
        <begin position="5"/>
        <end position="35"/>
    </location>
</feature>
<feature type="disulfide bond">
    <location>
        <begin position="13"/>
        <end position="32"/>
    </location>
</feature>
<feature type="disulfide bond">
    <location>
        <begin position="21"/>
        <end position="53"/>
    </location>
</feature>
<feature type="non-terminal residue">
    <location>
        <position position="1"/>
    </location>
</feature>
<feature type="non-terminal residue">
    <location>
        <position position="53"/>
    </location>
</feature>
<comment type="subcellular location">
    <subcellularLocation>
        <location>Secreted</location>
    </subcellularLocation>
</comment>
<comment type="domain">
    <text>Avian ovomucoid consists of three homologous, tandem Kazal family inhibitory domains.</text>
</comment>
<proteinExistence type="evidence at protein level"/>
<evidence type="ECO:0000255" key="1">
    <source>
        <dbReference type="PROSITE-ProRule" id="PRU00798"/>
    </source>
</evidence>
<evidence type="ECO:0000269" key="2">
    <source>
    </source>
</evidence>
<organism>
    <name type="scientific">Peliperdix coqui</name>
    <name type="common">Coqui francolin</name>
    <name type="synonym">Francolinus coqui</name>
    <dbReference type="NCBI Taxonomy" id="9021"/>
    <lineage>
        <taxon>Eukaryota</taxon>
        <taxon>Metazoa</taxon>
        <taxon>Chordata</taxon>
        <taxon>Craniata</taxon>
        <taxon>Vertebrata</taxon>
        <taxon>Euteleostomi</taxon>
        <taxon>Archelosauria</taxon>
        <taxon>Archosauria</taxon>
        <taxon>Dinosauria</taxon>
        <taxon>Saurischia</taxon>
        <taxon>Theropoda</taxon>
        <taxon>Coelurosauria</taxon>
        <taxon>Aves</taxon>
        <taxon>Neognathae</taxon>
        <taxon>Galloanserae</taxon>
        <taxon>Galliformes</taxon>
        <taxon>Phasianidae</taxon>
        <taxon>Perdicinae</taxon>
        <taxon>Peliperdix</taxon>
    </lineage>
</organism>